<keyword id="KW-1185">Reference proteome</keyword>
<dbReference type="EMBL" id="AE000657">
    <property type="protein sequence ID" value="AAC07021.1"/>
    <property type="molecule type" value="Genomic_DNA"/>
</dbReference>
<dbReference type="PIR" id="H70378">
    <property type="entry name" value="H70378"/>
</dbReference>
<dbReference type="RefSeq" id="NP_213621.1">
    <property type="nucleotide sequence ID" value="NC_000918.1"/>
</dbReference>
<dbReference type="RefSeq" id="WP_010880559.1">
    <property type="nucleotide sequence ID" value="NC_000918.1"/>
</dbReference>
<dbReference type="STRING" id="224324.aq_914"/>
<dbReference type="EnsemblBacteria" id="AAC07021">
    <property type="protein sequence ID" value="AAC07021"/>
    <property type="gene ID" value="aq_914"/>
</dbReference>
<dbReference type="KEGG" id="aae:aq_914"/>
<dbReference type="HOGENOM" id="CLU_2093486_0_0_0"/>
<dbReference type="InParanoid" id="O67059"/>
<dbReference type="OrthoDB" id="15602at2"/>
<dbReference type="Proteomes" id="UP000000798">
    <property type="component" value="Chromosome"/>
</dbReference>
<name>Y914_AQUAE</name>
<sequence>MKRMAGVLGVVLGVFALFGSGKSVDYGDWCPKGKSLGKDIYVEGIVDYEGKNWCKVVVRTPYSVTEVYYTPDGSGEKVVKYKNGKKMAEIELVENQVYLRLYDKNGKVVEEIKSREEF</sequence>
<feature type="chain" id="PRO_0000186887" description="Uncharacterized protein aq_914">
    <location>
        <begin position="1"/>
        <end position="118"/>
    </location>
</feature>
<reference key="1">
    <citation type="journal article" date="1998" name="Nature">
        <title>The complete genome of the hyperthermophilic bacterium Aquifex aeolicus.</title>
        <authorList>
            <person name="Deckert G."/>
            <person name="Warren P.V."/>
            <person name="Gaasterland T."/>
            <person name="Young W.G."/>
            <person name="Lenox A.L."/>
            <person name="Graham D.E."/>
            <person name="Overbeek R."/>
            <person name="Snead M.A."/>
            <person name="Keller M."/>
            <person name="Aujay M."/>
            <person name="Huber R."/>
            <person name="Feldman R.A."/>
            <person name="Short J.M."/>
            <person name="Olsen G.J."/>
            <person name="Swanson R.V."/>
        </authorList>
    </citation>
    <scope>NUCLEOTIDE SEQUENCE [LARGE SCALE GENOMIC DNA]</scope>
    <source>
        <strain>VF5</strain>
    </source>
</reference>
<proteinExistence type="predicted"/>
<organism>
    <name type="scientific">Aquifex aeolicus (strain VF5)</name>
    <dbReference type="NCBI Taxonomy" id="224324"/>
    <lineage>
        <taxon>Bacteria</taxon>
        <taxon>Pseudomonadati</taxon>
        <taxon>Aquificota</taxon>
        <taxon>Aquificia</taxon>
        <taxon>Aquificales</taxon>
        <taxon>Aquificaceae</taxon>
        <taxon>Aquifex</taxon>
    </lineage>
</organism>
<gene>
    <name type="ordered locus">aq_914</name>
</gene>
<accession>O67059</accession>
<protein>
    <recommendedName>
        <fullName>Uncharacterized protein aq_914</fullName>
    </recommendedName>
</protein>